<sequence>MSELIVKAKKLKQAASQLAMLSTEEKNNALAMIAEALIAQTGYILQENEKDMEIGKENGLSPSLLDRLQLTEERVQQIADGVRQVVDLPDPIGETIEQWTRPNGLILKQIRVPLGVVGMVYEARPNVTVDAASLCLKTGNAVLLRGSSSAIHSNKALISVMQQALKQSKIPTDAIQLLEDTSRETAQQMFRLKEYIDVLIPRGGAGLIQSVVENATIPVLETGVGNCHIFIDDSAQKEMAIDIVINAKLQRPSVCNAVETVIVHKQWPYIKELLETLHEKGVELRADKQLADTYPFVHEAKEEDWATEFLAPILAVKLVETVDEAIEHIERYGTKHSEAIISECNEHVEQFFARVDAAVLYHNASTRFTDGEQFGYGAEIGISTQKLHARGPMGLRAITTTKTLVYGSGQVRK</sequence>
<evidence type="ECO:0000255" key="1">
    <source>
        <dbReference type="HAMAP-Rule" id="MF_00412"/>
    </source>
</evidence>
<dbReference type="EC" id="1.2.1.41" evidence="1"/>
<dbReference type="EMBL" id="CP000922">
    <property type="protein sequence ID" value="ACJ33641.1"/>
    <property type="molecule type" value="Genomic_DNA"/>
</dbReference>
<dbReference type="RefSeq" id="WP_012574892.1">
    <property type="nucleotide sequence ID" value="NC_011567.1"/>
</dbReference>
<dbReference type="SMR" id="B7GJH1"/>
<dbReference type="STRING" id="491915.Aflv_1271"/>
<dbReference type="GeneID" id="7037525"/>
<dbReference type="KEGG" id="afl:Aflv_1271"/>
<dbReference type="PATRIC" id="fig|491915.6.peg.1307"/>
<dbReference type="eggNOG" id="COG0014">
    <property type="taxonomic scope" value="Bacteria"/>
</dbReference>
<dbReference type="HOGENOM" id="CLU_030231_0_0_9"/>
<dbReference type="UniPathway" id="UPA00098">
    <property type="reaction ID" value="UER00360"/>
</dbReference>
<dbReference type="Proteomes" id="UP000000742">
    <property type="component" value="Chromosome"/>
</dbReference>
<dbReference type="GO" id="GO:0005737">
    <property type="term" value="C:cytoplasm"/>
    <property type="evidence" value="ECO:0007669"/>
    <property type="project" value="UniProtKB-SubCell"/>
</dbReference>
<dbReference type="GO" id="GO:0004350">
    <property type="term" value="F:glutamate-5-semialdehyde dehydrogenase activity"/>
    <property type="evidence" value="ECO:0007669"/>
    <property type="project" value="UniProtKB-UniRule"/>
</dbReference>
<dbReference type="GO" id="GO:0050661">
    <property type="term" value="F:NADP binding"/>
    <property type="evidence" value="ECO:0007669"/>
    <property type="project" value="InterPro"/>
</dbReference>
<dbReference type="GO" id="GO:0055129">
    <property type="term" value="P:L-proline biosynthetic process"/>
    <property type="evidence" value="ECO:0007669"/>
    <property type="project" value="UniProtKB-UniRule"/>
</dbReference>
<dbReference type="CDD" id="cd07079">
    <property type="entry name" value="ALDH_F18-19_ProA-GPR"/>
    <property type="match status" value="1"/>
</dbReference>
<dbReference type="FunFam" id="3.40.309.10:FF:000006">
    <property type="entry name" value="Gamma-glutamyl phosphate reductase"/>
    <property type="match status" value="1"/>
</dbReference>
<dbReference type="Gene3D" id="3.40.605.10">
    <property type="entry name" value="Aldehyde Dehydrogenase, Chain A, domain 1"/>
    <property type="match status" value="1"/>
</dbReference>
<dbReference type="Gene3D" id="3.40.309.10">
    <property type="entry name" value="Aldehyde Dehydrogenase, Chain A, domain 2"/>
    <property type="match status" value="1"/>
</dbReference>
<dbReference type="HAMAP" id="MF_00412">
    <property type="entry name" value="ProA"/>
    <property type="match status" value="1"/>
</dbReference>
<dbReference type="InterPro" id="IPR016161">
    <property type="entry name" value="Ald_DH/histidinol_DH"/>
</dbReference>
<dbReference type="InterPro" id="IPR016163">
    <property type="entry name" value="Ald_DH_C"/>
</dbReference>
<dbReference type="InterPro" id="IPR016162">
    <property type="entry name" value="Ald_DH_N"/>
</dbReference>
<dbReference type="InterPro" id="IPR015590">
    <property type="entry name" value="Aldehyde_DH_dom"/>
</dbReference>
<dbReference type="InterPro" id="IPR020593">
    <property type="entry name" value="G-glutamylP_reductase_CS"/>
</dbReference>
<dbReference type="InterPro" id="IPR012134">
    <property type="entry name" value="Glu-5-SA_DH"/>
</dbReference>
<dbReference type="InterPro" id="IPR000965">
    <property type="entry name" value="GPR_dom"/>
</dbReference>
<dbReference type="NCBIfam" id="NF001221">
    <property type="entry name" value="PRK00197.1"/>
    <property type="match status" value="1"/>
</dbReference>
<dbReference type="NCBIfam" id="TIGR00407">
    <property type="entry name" value="proA"/>
    <property type="match status" value="1"/>
</dbReference>
<dbReference type="PANTHER" id="PTHR11063:SF8">
    <property type="entry name" value="DELTA-1-PYRROLINE-5-CARBOXYLATE SYNTHASE"/>
    <property type="match status" value="1"/>
</dbReference>
<dbReference type="PANTHER" id="PTHR11063">
    <property type="entry name" value="GLUTAMATE SEMIALDEHYDE DEHYDROGENASE"/>
    <property type="match status" value="1"/>
</dbReference>
<dbReference type="Pfam" id="PF00171">
    <property type="entry name" value="Aldedh"/>
    <property type="match status" value="1"/>
</dbReference>
<dbReference type="PIRSF" id="PIRSF000151">
    <property type="entry name" value="GPR"/>
    <property type="match status" value="1"/>
</dbReference>
<dbReference type="SUPFAM" id="SSF53720">
    <property type="entry name" value="ALDH-like"/>
    <property type="match status" value="1"/>
</dbReference>
<dbReference type="PROSITE" id="PS01223">
    <property type="entry name" value="PROA"/>
    <property type="match status" value="1"/>
</dbReference>
<name>PROA_ANOFW</name>
<organism>
    <name type="scientific">Anoxybacillus flavithermus (strain DSM 21510 / WK1)</name>
    <dbReference type="NCBI Taxonomy" id="491915"/>
    <lineage>
        <taxon>Bacteria</taxon>
        <taxon>Bacillati</taxon>
        <taxon>Bacillota</taxon>
        <taxon>Bacilli</taxon>
        <taxon>Bacillales</taxon>
        <taxon>Anoxybacillaceae</taxon>
        <taxon>Anoxybacillus</taxon>
    </lineage>
</organism>
<proteinExistence type="inferred from homology"/>
<reference key="1">
    <citation type="journal article" date="2008" name="Genome Biol.">
        <title>Encapsulated in silica: genome, proteome and physiology of the thermophilic bacterium Anoxybacillus flavithermus WK1.</title>
        <authorList>
            <person name="Saw J.H."/>
            <person name="Mountain B.W."/>
            <person name="Feng L."/>
            <person name="Omelchenko M.V."/>
            <person name="Hou S."/>
            <person name="Saito J.A."/>
            <person name="Stott M.B."/>
            <person name="Li D."/>
            <person name="Zhao G."/>
            <person name="Wu J."/>
            <person name="Galperin M.Y."/>
            <person name="Koonin E.V."/>
            <person name="Makarova K.S."/>
            <person name="Wolf Y.I."/>
            <person name="Rigden D.J."/>
            <person name="Dunfield P.F."/>
            <person name="Wang L."/>
            <person name="Alam M."/>
        </authorList>
    </citation>
    <scope>NUCLEOTIDE SEQUENCE [LARGE SCALE GENOMIC DNA]</scope>
    <source>
        <strain>DSM 21510 / WK1</strain>
    </source>
</reference>
<comment type="function">
    <text evidence="1">Catalyzes the NADPH-dependent reduction of L-glutamate 5-phosphate into L-glutamate 5-semialdehyde and phosphate. The product spontaneously undergoes cyclization to form 1-pyrroline-5-carboxylate.</text>
</comment>
<comment type="catalytic activity">
    <reaction evidence="1">
        <text>L-glutamate 5-semialdehyde + phosphate + NADP(+) = L-glutamyl 5-phosphate + NADPH + H(+)</text>
        <dbReference type="Rhea" id="RHEA:19541"/>
        <dbReference type="ChEBI" id="CHEBI:15378"/>
        <dbReference type="ChEBI" id="CHEBI:43474"/>
        <dbReference type="ChEBI" id="CHEBI:57783"/>
        <dbReference type="ChEBI" id="CHEBI:58066"/>
        <dbReference type="ChEBI" id="CHEBI:58274"/>
        <dbReference type="ChEBI" id="CHEBI:58349"/>
        <dbReference type="EC" id="1.2.1.41"/>
    </reaction>
</comment>
<comment type="pathway">
    <text evidence="1">Amino-acid biosynthesis; L-proline biosynthesis; L-glutamate 5-semialdehyde from L-glutamate: step 2/2.</text>
</comment>
<comment type="subcellular location">
    <subcellularLocation>
        <location evidence="1">Cytoplasm</location>
    </subcellularLocation>
</comment>
<comment type="similarity">
    <text evidence="1">Belongs to the gamma-glutamyl phosphate reductase family.</text>
</comment>
<protein>
    <recommendedName>
        <fullName evidence="1">Gamma-glutamyl phosphate reductase</fullName>
        <shortName evidence="1">GPR</shortName>
        <ecNumber evidence="1">1.2.1.41</ecNumber>
    </recommendedName>
    <alternativeName>
        <fullName evidence="1">Glutamate-5-semialdehyde dehydrogenase</fullName>
    </alternativeName>
    <alternativeName>
        <fullName evidence="1">Glutamyl-gamma-semialdehyde dehydrogenase</fullName>
        <shortName evidence="1">GSA dehydrogenase</shortName>
    </alternativeName>
</protein>
<feature type="chain" id="PRO_1000123774" description="Gamma-glutamyl phosphate reductase">
    <location>
        <begin position="1"/>
        <end position="413"/>
    </location>
</feature>
<keyword id="KW-0028">Amino-acid biosynthesis</keyword>
<keyword id="KW-0963">Cytoplasm</keyword>
<keyword id="KW-0521">NADP</keyword>
<keyword id="KW-0560">Oxidoreductase</keyword>
<keyword id="KW-0641">Proline biosynthesis</keyword>
<gene>
    <name evidence="1" type="primary">proA</name>
    <name type="ordered locus">Aflv_1271</name>
</gene>
<accession>B7GJH1</accession>